<reference key="1">
    <citation type="submission" date="2006-12" db="EMBL/GenBank/DDBJ databases">
        <title>Complete sequence of Halorhodospira halophila SL1.</title>
        <authorList>
            <consortium name="US DOE Joint Genome Institute"/>
            <person name="Copeland A."/>
            <person name="Lucas S."/>
            <person name="Lapidus A."/>
            <person name="Barry K."/>
            <person name="Detter J.C."/>
            <person name="Glavina del Rio T."/>
            <person name="Hammon N."/>
            <person name="Israni S."/>
            <person name="Dalin E."/>
            <person name="Tice H."/>
            <person name="Pitluck S."/>
            <person name="Saunders E."/>
            <person name="Brettin T."/>
            <person name="Bruce D."/>
            <person name="Han C."/>
            <person name="Tapia R."/>
            <person name="Schmutz J."/>
            <person name="Larimer F."/>
            <person name="Land M."/>
            <person name="Hauser L."/>
            <person name="Kyrpides N."/>
            <person name="Mikhailova N."/>
            <person name="Hoff W."/>
            <person name="Richardson P."/>
        </authorList>
    </citation>
    <scope>NUCLEOTIDE SEQUENCE [LARGE SCALE GENOMIC DNA]</scope>
    <source>
        <strain>DSM 244 / SL1</strain>
    </source>
</reference>
<gene>
    <name evidence="1" type="primary">ubiD</name>
    <name type="ordered locus">Hhal_2282</name>
</gene>
<feature type="chain" id="PRO_1000069846" description="3-octaprenyl-4-hydroxybenzoate carboxy-lyase">
    <location>
        <begin position="1"/>
        <end position="488"/>
    </location>
</feature>
<feature type="active site" description="Proton donor" evidence="1">
    <location>
        <position position="287"/>
    </location>
</feature>
<feature type="binding site" evidence="1">
    <location>
        <position position="172"/>
    </location>
    <ligand>
        <name>Mn(2+)</name>
        <dbReference type="ChEBI" id="CHEBI:29035"/>
    </ligand>
</feature>
<feature type="binding site" evidence="1">
    <location>
        <begin position="175"/>
        <end position="177"/>
    </location>
    <ligand>
        <name>prenylated FMN</name>
        <dbReference type="ChEBI" id="CHEBI:87746"/>
    </ligand>
</feature>
<feature type="binding site" evidence="1">
    <location>
        <begin position="189"/>
        <end position="191"/>
    </location>
    <ligand>
        <name>prenylated FMN</name>
        <dbReference type="ChEBI" id="CHEBI:87746"/>
    </ligand>
</feature>
<feature type="binding site" evidence="1">
    <location>
        <begin position="194"/>
        <end position="195"/>
    </location>
    <ligand>
        <name>prenylated FMN</name>
        <dbReference type="ChEBI" id="CHEBI:87746"/>
    </ligand>
</feature>
<feature type="binding site" evidence="1">
    <location>
        <position position="238"/>
    </location>
    <ligand>
        <name>Mn(2+)</name>
        <dbReference type="ChEBI" id="CHEBI:29035"/>
    </ligand>
</feature>
<organism>
    <name type="scientific">Halorhodospira halophila (strain DSM 244 / SL1)</name>
    <name type="common">Ectothiorhodospira halophila (strain DSM 244 / SL1)</name>
    <dbReference type="NCBI Taxonomy" id="349124"/>
    <lineage>
        <taxon>Bacteria</taxon>
        <taxon>Pseudomonadati</taxon>
        <taxon>Pseudomonadota</taxon>
        <taxon>Gammaproteobacteria</taxon>
        <taxon>Chromatiales</taxon>
        <taxon>Ectothiorhodospiraceae</taxon>
        <taxon>Halorhodospira</taxon>
    </lineage>
</organism>
<accession>A1WZD4</accession>
<evidence type="ECO:0000255" key="1">
    <source>
        <dbReference type="HAMAP-Rule" id="MF_01636"/>
    </source>
</evidence>
<keyword id="KW-1003">Cell membrane</keyword>
<keyword id="KW-0210">Decarboxylase</keyword>
<keyword id="KW-0285">Flavoprotein</keyword>
<keyword id="KW-0288">FMN</keyword>
<keyword id="KW-0456">Lyase</keyword>
<keyword id="KW-0464">Manganese</keyword>
<keyword id="KW-0472">Membrane</keyword>
<keyword id="KW-0479">Metal-binding</keyword>
<keyword id="KW-1185">Reference proteome</keyword>
<keyword id="KW-0831">Ubiquinone biosynthesis</keyword>
<dbReference type="EC" id="4.1.1.98" evidence="1"/>
<dbReference type="EMBL" id="CP000544">
    <property type="protein sequence ID" value="ABM63046.1"/>
    <property type="molecule type" value="Genomic_DNA"/>
</dbReference>
<dbReference type="RefSeq" id="WP_011815068.1">
    <property type="nucleotide sequence ID" value="NC_008789.1"/>
</dbReference>
<dbReference type="SMR" id="A1WZD4"/>
<dbReference type="STRING" id="349124.Hhal_2282"/>
<dbReference type="KEGG" id="hha:Hhal_2282"/>
<dbReference type="eggNOG" id="COG0043">
    <property type="taxonomic scope" value="Bacteria"/>
</dbReference>
<dbReference type="HOGENOM" id="CLU_023348_4_1_6"/>
<dbReference type="OrthoDB" id="9809841at2"/>
<dbReference type="UniPathway" id="UPA00232"/>
<dbReference type="Proteomes" id="UP000000647">
    <property type="component" value="Chromosome"/>
</dbReference>
<dbReference type="GO" id="GO:0005829">
    <property type="term" value="C:cytosol"/>
    <property type="evidence" value="ECO:0007669"/>
    <property type="project" value="TreeGrafter"/>
</dbReference>
<dbReference type="GO" id="GO:0005886">
    <property type="term" value="C:plasma membrane"/>
    <property type="evidence" value="ECO:0007669"/>
    <property type="project" value="UniProtKB-SubCell"/>
</dbReference>
<dbReference type="GO" id="GO:0008694">
    <property type="term" value="F:3-octaprenyl-4-hydroxybenzoate carboxy-lyase activity"/>
    <property type="evidence" value="ECO:0007669"/>
    <property type="project" value="UniProtKB-UniRule"/>
</dbReference>
<dbReference type="GO" id="GO:0046872">
    <property type="term" value="F:metal ion binding"/>
    <property type="evidence" value="ECO:0007669"/>
    <property type="project" value="UniProtKB-KW"/>
</dbReference>
<dbReference type="GO" id="GO:0006744">
    <property type="term" value="P:ubiquinone biosynthetic process"/>
    <property type="evidence" value="ECO:0007669"/>
    <property type="project" value="UniProtKB-UniRule"/>
</dbReference>
<dbReference type="FunFam" id="3.40.1670.10:FF:000001">
    <property type="entry name" value="3-octaprenyl-4-hydroxybenzoate carboxy-lyase"/>
    <property type="match status" value="1"/>
</dbReference>
<dbReference type="Gene3D" id="1.20.5.570">
    <property type="entry name" value="Single helix bin"/>
    <property type="match status" value="1"/>
</dbReference>
<dbReference type="Gene3D" id="3.40.1670.10">
    <property type="entry name" value="UbiD C-terminal domain-like"/>
    <property type="match status" value="1"/>
</dbReference>
<dbReference type="HAMAP" id="MF_01636">
    <property type="entry name" value="UbiD"/>
    <property type="match status" value="1"/>
</dbReference>
<dbReference type="InterPro" id="IPR002830">
    <property type="entry name" value="UbiD"/>
</dbReference>
<dbReference type="InterPro" id="IPR049381">
    <property type="entry name" value="UbiD-like_C"/>
</dbReference>
<dbReference type="InterPro" id="IPR049383">
    <property type="entry name" value="UbiD-like_N"/>
</dbReference>
<dbReference type="InterPro" id="IPR023677">
    <property type="entry name" value="UbiD_bacteria"/>
</dbReference>
<dbReference type="InterPro" id="IPR048304">
    <property type="entry name" value="UbiD_Rift_dom"/>
</dbReference>
<dbReference type="NCBIfam" id="NF008175">
    <property type="entry name" value="PRK10922.1"/>
    <property type="match status" value="1"/>
</dbReference>
<dbReference type="NCBIfam" id="TIGR00148">
    <property type="entry name" value="UbiD family decarboxylase"/>
    <property type="match status" value="1"/>
</dbReference>
<dbReference type="PANTHER" id="PTHR30108">
    <property type="entry name" value="3-OCTAPRENYL-4-HYDROXYBENZOATE CARBOXY-LYASE-RELATED"/>
    <property type="match status" value="1"/>
</dbReference>
<dbReference type="PANTHER" id="PTHR30108:SF17">
    <property type="entry name" value="FERULIC ACID DECARBOXYLASE 1"/>
    <property type="match status" value="1"/>
</dbReference>
<dbReference type="Pfam" id="PF01977">
    <property type="entry name" value="UbiD"/>
    <property type="match status" value="1"/>
</dbReference>
<dbReference type="Pfam" id="PF20696">
    <property type="entry name" value="UbiD_C"/>
    <property type="match status" value="1"/>
</dbReference>
<dbReference type="Pfam" id="PF20695">
    <property type="entry name" value="UbiD_N"/>
    <property type="match status" value="1"/>
</dbReference>
<dbReference type="SUPFAM" id="SSF50475">
    <property type="entry name" value="FMN-binding split barrel"/>
    <property type="match status" value="1"/>
</dbReference>
<dbReference type="SUPFAM" id="SSF143968">
    <property type="entry name" value="UbiD C-terminal domain-like"/>
    <property type="match status" value="1"/>
</dbReference>
<proteinExistence type="inferred from homology"/>
<sequence>MKYRDLREFLHHLEARGELKRIRHPVDPYLEMTEVCDRTLRAGGPALLFEHPRGYDTPVLGNLFGTPHRVALGMGAEEVAALREIGELLAFLRQPEPPKGMRDAWNQLPVFRRVLDMAPKTVRKAPCQERVIEGEDVDLSRWPIQTCWPGDAGPLITWALVITRGPEKERQNLGIYRQQVIGRNRVIMRWLAHRGGALDFAEHQRHYPGEPFPVAVALGADPATILGAVTPVPDAISEYAFAGLLRGSKTELVTCKGSSLQVPASAEVVLEGHIHPGDTAEEGPFADHTGYYNETETFPVFTIDRITHRADPIYHSTYTGRPPDEPAVLGEALNEVFVPILRKQFPEIVDFYLPPEGCSYRLAVVTIRKQYPGHAKRVMLGVWSFLRQFMYTKFIIVTDGDVDARDWKAVVWALTTRSDPRRDATFIDHSPIDYLDFASPISGLGSKMGLDATNKWPGETDRTWGTPATMDEATRARVDAYWAELGLD</sequence>
<name>UBID_HALHL</name>
<comment type="function">
    <text evidence="1">Catalyzes the decarboxylation of 3-octaprenyl-4-hydroxy benzoate to 2-octaprenylphenol, an intermediate step in ubiquinone biosynthesis.</text>
</comment>
<comment type="catalytic activity">
    <reaction evidence="1">
        <text>a 4-hydroxy-3-(all-trans-polyprenyl)benzoate + H(+) = a 2-(all-trans-polyprenyl)phenol + CO2</text>
        <dbReference type="Rhea" id="RHEA:41680"/>
        <dbReference type="Rhea" id="RHEA-COMP:9514"/>
        <dbReference type="Rhea" id="RHEA-COMP:9516"/>
        <dbReference type="ChEBI" id="CHEBI:1269"/>
        <dbReference type="ChEBI" id="CHEBI:15378"/>
        <dbReference type="ChEBI" id="CHEBI:16526"/>
        <dbReference type="ChEBI" id="CHEBI:78396"/>
        <dbReference type="EC" id="4.1.1.98"/>
    </reaction>
</comment>
<comment type="cofactor">
    <cofactor evidence="1">
        <name>prenylated FMN</name>
        <dbReference type="ChEBI" id="CHEBI:87746"/>
    </cofactor>
    <text evidence="1">Binds 1 prenylated FMN per subunit.</text>
</comment>
<comment type="cofactor">
    <cofactor evidence="1">
        <name>Mn(2+)</name>
        <dbReference type="ChEBI" id="CHEBI:29035"/>
    </cofactor>
</comment>
<comment type="pathway">
    <text evidence="1">Cofactor biosynthesis; ubiquinone biosynthesis.</text>
</comment>
<comment type="subunit">
    <text evidence="1">Homohexamer.</text>
</comment>
<comment type="subcellular location">
    <subcellularLocation>
        <location evidence="1">Cell membrane</location>
        <topology evidence="1">Peripheral membrane protein</topology>
    </subcellularLocation>
</comment>
<comment type="similarity">
    <text evidence="1">Belongs to the UbiD family.</text>
</comment>
<protein>
    <recommendedName>
        <fullName evidence="1">3-octaprenyl-4-hydroxybenzoate carboxy-lyase</fullName>
        <ecNumber evidence="1">4.1.1.98</ecNumber>
    </recommendedName>
    <alternativeName>
        <fullName evidence="1">Polyprenyl p-hydroxybenzoate decarboxylase</fullName>
    </alternativeName>
</protein>